<keyword id="KW-0004">4Fe-4S</keyword>
<keyword id="KW-0963">Cytoplasm</keyword>
<keyword id="KW-0408">Iron</keyword>
<keyword id="KW-0411">Iron-sulfur</keyword>
<keyword id="KW-0479">Metal-binding</keyword>
<keyword id="KW-1185">Reference proteome</keyword>
<keyword id="KW-0949">S-adenosyl-L-methionine</keyword>
<keyword id="KW-0808">Transferase</keyword>
<evidence type="ECO:0000255" key="1">
    <source>
        <dbReference type="HAMAP-Rule" id="MF_01865"/>
    </source>
</evidence>
<evidence type="ECO:0000255" key="2">
    <source>
        <dbReference type="PROSITE-ProRule" id="PRU01266"/>
    </source>
</evidence>
<protein>
    <recommendedName>
        <fullName evidence="1">Ribosomal protein uS12 methylthiotransferase RimO</fullName>
        <shortName evidence="1">uS12 MTTase</shortName>
        <shortName evidence="1">uS12 methylthiotransferase</shortName>
        <ecNumber evidence="1">2.8.4.4</ecNumber>
    </recommendedName>
    <alternativeName>
        <fullName evidence="1">Ribosomal protein uS12 (aspartate-C(3))-methylthiotransferase</fullName>
    </alternativeName>
    <alternativeName>
        <fullName evidence="1">Ribosome maturation factor RimO</fullName>
    </alternativeName>
</protein>
<organism>
    <name type="scientific">Azorhizobium caulinodans (strain ATCC 43989 / DSM 5975 / JCM 20966 / LMG 6465 / NBRC 14845 / NCIMB 13405 / ORS 571)</name>
    <dbReference type="NCBI Taxonomy" id="438753"/>
    <lineage>
        <taxon>Bacteria</taxon>
        <taxon>Pseudomonadati</taxon>
        <taxon>Pseudomonadota</taxon>
        <taxon>Alphaproteobacteria</taxon>
        <taxon>Hyphomicrobiales</taxon>
        <taxon>Xanthobacteraceae</taxon>
        <taxon>Azorhizobium</taxon>
    </lineage>
</organism>
<accession>A8I0G1</accession>
<gene>
    <name evidence="1" type="primary">rimO</name>
    <name type="ordered locus">AZC_1254</name>
</gene>
<comment type="function">
    <text evidence="1">Catalyzes the methylthiolation of an aspartic acid residue of ribosomal protein uS12.</text>
</comment>
<comment type="catalytic activity">
    <reaction evidence="1">
        <text>L-aspartate(89)-[ribosomal protein uS12]-hydrogen + (sulfur carrier)-SH + AH2 + 2 S-adenosyl-L-methionine = 3-methylsulfanyl-L-aspartate(89)-[ribosomal protein uS12]-hydrogen + (sulfur carrier)-H + 5'-deoxyadenosine + L-methionine + A + S-adenosyl-L-homocysteine + 2 H(+)</text>
        <dbReference type="Rhea" id="RHEA:37087"/>
        <dbReference type="Rhea" id="RHEA-COMP:10460"/>
        <dbReference type="Rhea" id="RHEA-COMP:10461"/>
        <dbReference type="Rhea" id="RHEA-COMP:14737"/>
        <dbReference type="Rhea" id="RHEA-COMP:14739"/>
        <dbReference type="ChEBI" id="CHEBI:13193"/>
        <dbReference type="ChEBI" id="CHEBI:15378"/>
        <dbReference type="ChEBI" id="CHEBI:17319"/>
        <dbReference type="ChEBI" id="CHEBI:17499"/>
        <dbReference type="ChEBI" id="CHEBI:29917"/>
        <dbReference type="ChEBI" id="CHEBI:29961"/>
        <dbReference type="ChEBI" id="CHEBI:57844"/>
        <dbReference type="ChEBI" id="CHEBI:57856"/>
        <dbReference type="ChEBI" id="CHEBI:59789"/>
        <dbReference type="ChEBI" id="CHEBI:64428"/>
        <dbReference type="ChEBI" id="CHEBI:73599"/>
        <dbReference type="EC" id="2.8.4.4"/>
    </reaction>
</comment>
<comment type="cofactor">
    <cofactor evidence="1">
        <name>[4Fe-4S] cluster</name>
        <dbReference type="ChEBI" id="CHEBI:49883"/>
    </cofactor>
    <text evidence="1">Binds 2 [4Fe-4S] clusters. One cluster is coordinated with 3 cysteines and an exchangeable S-adenosyl-L-methionine.</text>
</comment>
<comment type="subcellular location">
    <subcellularLocation>
        <location evidence="1">Cytoplasm</location>
    </subcellularLocation>
</comment>
<comment type="similarity">
    <text evidence="1">Belongs to the methylthiotransferase family. RimO subfamily.</text>
</comment>
<sequence length="450" mass="49432">MAEPTSTLSTATPAAPRISFVSLGCPKALVDSERIVTRLRAEGYELTRNHDGADLVIVNTCGFLDSAKAESLSAIGEALAENGKVVVTGCMGAEPEQIRAVHPSVLAITGPQQYESVLDAVHQAVPPKHDPFLDLVPEQGVKLTPRHYAYLKISEGCNNRCTFCIIPKLRGDLVSRPLNEVMREAEKLVAAGVKELLVISQDTSAYGVDLKYAESRWKDRDWATRFFDLADALGDLGAWVRLHYVYPYPHVDRVMELMASGKVLPYLDIPFQHASPTVLRRMKRPAAQEKTLARVLAWRDAVPDITLRSTFIVGFPGETEEEFQELLDFLDEAQLDRVGCFKFEPVAGAPANALENPVPDEVKAERYDRFMLKQQAISARRLKRKVGTRQQVIIDSVTPGGAIGRTKGDAPEIDGSVKIASRRPLRVGEIATVKIEAADAYDLIGSAVGF</sequence>
<dbReference type="EC" id="2.8.4.4" evidence="1"/>
<dbReference type="EMBL" id="AP009384">
    <property type="protein sequence ID" value="BAF87252.1"/>
    <property type="molecule type" value="Genomic_DNA"/>
</dbReference>
<dbReference type="RefSeq" id="WP_012169785.1">
    <property type="nucleotide sequence ID" value="NC_009937.1"/>
</dbReference>
<dbReference type="SMR" id="A8I0G1"/>
<dbReference type="STRING" id="438753.AZC_1254"/>
<dbReference type="KEGG" id="azc:AZC_1254"/>
<dbReference type="eggNOG" id="COG0621">
    <property type="taxonomic scope" value="Bacteria"/>
</dbReference>
<dbReference type="HOGENOM" id="CLU_018697_0_0_5"/>
<dbReference type="Proteomes" id="UP000000270">
    <property type="component" value="Chromosome"/>
</dbReference>
<dbReference type="GO" id="GO:0005829">
    <property type="term" value="C:cytosol"/>
    <property type="evidence" value="ECO:0007669"/>
    <property type="project" value="TreeGrafter"/>
</dbReference>
<dbReference type="GO" id="GO:0051539">
    <property type="term" value="F:4 iron, 4 sulfur cluster binding"/>
    <property type="evidence" value="ECO:0007669"/>
    <property type="project" value="UniProtKB-UniRule"/>
</dbReference>
<dbReference type="GO" id="GO:0035599">
    <property type="term" value="F:aspartic acid methylthiotransferase activity"/>
    <property type="evidence" value="ECO:0007669"/>
    <property type="project" value="TreeGrafter"/>
</dbReference>
<dbReference type="GO" id="GO:0046872">
    <property type="term" value="F:metal ion binding"/>
    <property type="evidence" value="ECO:0007669"/>
    <property type="project" value="UniProtKB-KW"/>
</dbReference>
<dbReference type="GO" id="GO:0103039">
    <property type="term" value="F:protein methylthiotransferase activity"/>
    <property type="evidence" value="ECO:0007669"/>
    <property type="project" value="UniProtKB-EC"/>
</dbReference>
<dbReference type="GO" id="GO:0006400">
    <property type="term" value="P:tRNA modification"/>
    <property type="evidence" value="ECO:0007669"/>
    <property type="project" value="InterPro"/>
</dbReference>
<dbReference type="CDD" id="cd01335">
    <property type="entry name" value="Radical_SAM"/>
    <property type="match status" value="1"/>
</dbReference>
<dbReference type="FunFam" id="3.40.50.12160:FF:000002">
    <property type="entry name" value="Ribosomal protein S12 methylthiotransferase RimO"/>
    <property type="match status" value="1"/>
</dbReference>
<dbReference type="FunFam" id="3.80.30.20:FF:000001">
    <property type="entry name" value="tRNA-2-methylthio-N(6)-dimethylallyladenosine synthase 2"/>
    <property type="match status" value="1"/>
</dbReference>
<dbReference type="Gene3D" id="3.40.50.12160">
    <property type="entry name" value="Methylthiotransferase, N-terminal domain"/>
    <property type="match status" value="1"/>
</dbReference>
<dbReference type="Gene3D" id="2.40.50.140">
    <property type="entry name" value="Nucleic acid-binding proteins"/>
    <property type="match status" value="1"/>
</dbReference>
<dbReference type="Gene3D" id="3.80.30.20">
    <property type="entry name" value="tm_1862 like domain"/>
    <property type="match status" value="1"/>
</dbReference>
<dbReference type="HAMAP" id="MF_01865">
    <property type="entry name" value="MTTase_RimO"/>
    <property type="match status" value="1"/>
</dbReference>
<dbReference type="InterPro" id="IPR006638">
    <property type="entry name" value="Elp3/MiaA/NifB-like_rSAM"/>
</dbReference>
<dbReference type="InterPro" id="IPR005839">
    <property type="entry name" value="Methylthiotransferase"/>
</dbReference>
<dbReference type="InterPro" id="IPR020612">
    <property type="entry name" value="Methylthiotransferase_CS"/>
</dbReference>
<dbReference type="InterPro" id="IPR013848">
    <property type="entry name" value="Methylthiotransferase_N"/>
</dbReference>
<dbReference type="InterPro" id="IPR038135">
    <property type="entry name" value="Methylthiotransferase_N_sf"/>
</dbReference>
<dbReference type="InterPro" id="IPR012340">
    <property type="entry name" value="NA-bd_OB-fold"/>
</dbReference>
<dbReference type="InterPro" id="IPR005840">
    <property type="entry name" value="Ribosomal_uS12_MeSTrfase_RimO"/>
</dbReference>
<dbReference type="InterPro" id="IPR007197">
    <property type="entry name" value="rSAM"/>
</dbReference>
<dbReference type="InterPro" id="IPR023404">
    <property type="entry name" value="rSAM_horseshoe"/>
</dbReference>
<dbReference type="InterPro" id="IPR002792">
    <property type="entry name" value="TRAM_dom"/>
</dbReference>
<dbReference type="NCBIfam" id="TIGR01125">
    <property type="entry name" value="30S ribosomal protein S12 methylthiotransferase RimO"/>
    <property type="match status" value="1"/>
</dbReference>
<dbReference type="NCBIfam" id="TIGR00089">
    <property type="entry name" value="MiaB/RimO family radical SAM methylthiotransferase"/>
    <property type="match status" value="1"/>
</dbReference>
<dbReference type="PANTHER" id="PTHR43837">
    <property type="entry name" value="RIBOSOMAL PROTEIN S12 METHYLTHIOTRANSFERASE RIMO"/>
    <property type="match status" value="1"/>
</dbReference>
<dbReference type="PANTHER" id="PTHR43837:SF1">
    <property type="entry name" value="RIBOSOMAL PROTEIN US12 METHYLTHIOTRANSFERASE RIMO"/>
    <property type="match status" value="1"/>
</dbReference>
<dbReference type="Pfam" id="PF04055">
    <property type="entry name" value="Radical_SAM"/>
    <property type="match status" value="1"/>
</dbReference>
<dbReference type="Pfam" id="PF18693">
    <property type="entry name" value="TRAM_2"/>
    <property type="match status" value="1"/>
</dbReference>
<dbReference type="Pfam" id="PF00919">
    <property type="entry name" value="UPF0004"/>
    <property type="match status" value="1"/>
</dbReference>
<dbReference type="SFLD" id="SFLDG01082">
    <property type="entry name" value="B12-binding_domain_containing"/>
    <property type="match status" value="1"/>
</dbReference>
<dbReference type="SFLD" id="SFLDG01061">
    <property type="entry name" value="methylthiotransferase"/>
    <property type="match status" value="1"/>
</dbReference>
<dbReference type="SFLD" id="SFLDF00274">
    <property type="entry name" value="ribosomal_protein_S12_methylth"/>
    <property type="match status" value="1"/>
</dbReference>
<dbReference type="SMART" id="SM00729">
    <property type="entry name" value="Elp3"/>
    <property type="match status" value="1"/>
</dbReference>
<dbReference type="SUPFAM" id="SSF102114">
    <property type="entry name" value="Radical SAM enzymes"/>
    <property type="match status" value="1"/>
</dbReference>
<dbReference type="PROSITE" id="PS51449">
    <property type="entry name" value="MTTASE_N"/>
    <property type="match status" value="1"/>
</dbReference>
<dbReference type="PROSITE" id="PS01278">
    <property type="entry name" value="MTTASE_RADICAL"/>
    <property type="match status" value="1"/>
</dbReference>
<dbReference type="PROSITE" id="PS51918">
    <property type="entry name" value="RADICAL_SAM"/>
    <property type="match status" value="1"/>
</dbReference>
<dbReference type="PROSITE" id="PS50926">
    <property type="entry name" value="TRAM"/>
    <property type="match status" value="1"/>
</dbReference>
<proteinExistence type="inferred from homology"/>
<reference key="1">
    <citation type="submission" date="2007-04" db="EMBL/GenBank/DDBJ databases">
        <title>Complete genome sequence of the nitrogen-fixing bacterium Azorhizobium caulinodans ORS571.</title>
        <authorList>
            <person name="Lee K.B."/>
            <person name="Backer P.D."/>
            <person name="Aono T."/>
            <person name="Liu C.T."/>
            <person name="Suzuki S."/>
            <person name="Suzuki T."/>
            <person name="Kaneko T."/>
            <person name="Yamada M."/>
            <person name="Tabata S."/>
            <person name="Kupfer D.M."/>
            <person name="Najar F.Z."/>
            <person name="Wiley G.B."/>
            <person name="Roe B."/>
            <person name="Binnewies T."/>
            <person name="Ussery D."/>
            <person name="Vereecke D."/>
            <person name="Gevers D."/>
            <person name="Holsters M."/>
            <person name="Oyaizu H."/>
        </authorList>
    </citation>
    <scope>NUCLEOTIDE SEQUENCE [LARGE SCALE GENOMIC DNA]</scope>
    <source>
        <strain>ATCC 43989 / DSM 5975 / JCM 20966 / LMG 6465 / NBRC 14845 / NCIMB 13405 / ORS 571</strain>
    </source>
</reference>
<name>RIMO_AZOC5</name>
<feature type="chain" id="PRO_0000374704" description="Ribosomal protein uS12 methylthiotransferase RimO">
    <location>
        <begin position="1"/>
        <end position="450"/>
    </location>
</feature>
<feature type="domain" description="MTTase N-terminal" evidence="1">
    <location>
        <begin position="16"/>
        <end position="126"/>
    </location>
</feature>
<feature type="domain" description="Radical SAM core" evidence="2">
    <location>
        <begin position="143"/>
        <end position="380"/>
    </location>
</feature>
<feature type="domain" description="TRAM" evidence="1">
    <location>
        <begin position="383"/>
        <end position="449"/>
    </location>
</feature>
<feature type="binding site" evidence="1">
    <location>
        <position position="25"/>
    </location>
    <ligand>
        <name>[4Fe-4S] cluster</name>
        <dbReference type="ChEBI" id="CHEBI:49883"/>
        <label>1</label>
    </ligand>
</feature>
<feature type="binding site" evidence="1">
    <location>
        <position position="61"/>
    </location>
    <ligand>
        <name>[4Fe-4S] cluster</name>
        <dbReference type="ChEBI" id="CHEBI:49883"/>
        <label>1</label>
    </ligand>
</feature>
<feature type="binding site" evidence="1">
    <location>
        <position position="90"/>
    </location>
    <ligand>
        <name>[4Fe-4S] cluster</name>
        <dbReference type="ChEBI" id="CHEBI:49883"/>
        <label>1</label>
    </ligand>
</feature>
<feature type="binding site" evidence="1">
    <location>
        <position position="157"/>
    </location>
    <ligand>
        <name>[4Fe-4S] cluster</name>
        <dbReference type="ChEBI" id="CHEBI:49883"/>
        <label>2</label>
        <note>4Fe-4S-S-AdoMet</note>
    </ligand>
</feature>
<feature type="binding site" evidence="1">
    <location>
        <position position="161"/>
    </location>
    <ligand>
        <name>[4Fe-4S] cluster</name>
        <dbReference type="ChEBI" id="CHEBI:49883"/>
        <label>2</label>
        <note>4Fe-4S-S-AdoMet</note>
    </ligand>
</feature>
<feature type="binding site" evidence="1">
    <location>
        <position position="164"/>
    </location>
    <ligand>
        <name>[4Fe-4S] cluster</name>
        <dbReference type="ChEBI" id="CHEBI:49883"/>
        <label>2</label>
        <note>4Fe-4S-S-AdoMet</note>
    </ligand>
</feature>